<dbReference type="EMBL" id="AE014299">
    <property type="protein sequence ID" value="AAN57687.1"/>
    <property type="molecule type" value="Genomic_DNA"/>
</dbReference>
<dbReference type="RefSeq" id="NP_720244.1">
    <property type="nucleotide sequence ID" value="NC_004347.2"/>
</dbReference>
<dbReference type="RefSeq" id="WP_011074314.1">
    <property type="nucleotide sequence ID" value="NC_004347.2"/>
</dbReference>
<dbReference type="SMR" id="Q8E8D7"/>
<dbReference type="STRING" id="211586.SO_4728"/>
<dbReference type="PaxDb" id="211586-SO_4728"/>
<dbReference type="KEGG" id="son:SO_4728"/>
<dbReference type="PATRIC" id="fig|211586.12.peg.4585"/>
<dbReference type="eggNOG" id="COG3078">
    <property type="taxonomic scope" value="Bacteria"/>
</dbReference>
<dbReference type="HOGENOM" id="CLU_094104_3_0_6"/>
<dbReference type="OrthoDB" id="5677577at2"/>
<dbReference type="PhylomeDB" id="Q8E8D7"/>
<dbReference type="BioCyc" id="SONE211586:G1GMP-4373-MONOMER"/>
<dbReference type="Proteomes" id="UP000008186">
    <property type="component" value="Chromosome"/>
</dbReference>
<dbReference type="GO" id="GO:0005096">
    <property type="term" value="F:GTPase activator activity"/>
    <property type="evidence" value="ECO:0007669"/>
    <property type="project" value="UniProtKB-KW"/>
</dbReference>
<dbReference type="GO" id="GO:0042254">
    <property type="term" value="P:ribosome biogenesis"/>
    <property type="evidence" value="ECO:0007669"/>
    <property type="project" value="UniProtKB-KW"/>
</dbReference>
<dbReference type="HAMAP" id="MF_01058">
    <property type="entry name" value="GAP_YihI"/>
    <property type="match status" value="1"/>
</dbReference>
<dbReference type="InterPro" id="IPR007336">
    <property type="entry name" value="YihI"/>
</dbReference>
<dbReference type="NCBIfam" id="NF003560">
    <property type="entry name" value="PRK05244.1-1"/>
    <property type="match status" value="1"/>
</dbReference>
<dbReference type="Pfam" id="PF04220">
    <property type="entry name" value="YihI"/>
    <property type="match status" value="1"/>
</dbReference>
<name>YIHI_SHEON</name>
<feature type="chain" id="PRO_0000209593" description="Der GTPase-activating protein YihI">
    <location>
        <begin position="1"/>
        <end position="183"/>
    </location>
</feature>
<feature type="region of interest" description="Disordered" evidence="2">
    <location>
        <begin position="1"/>
        <end position="101"/>
    </location>
</feature>
<feature type="compositionally biased region" description="Basic and acidic residues" evidence="2">
    <location>
        <begin position="22"/>
        <end position="46"/>
    </location>
</feature>
<feature type="compositionally biased region" description="Basic and acidic residues" evidence="2">
    <location>
        <begin position="92"/>
        <end position="101"/>
    </location>
</feature>
<proteinExistence type="inferred from homology"/>
<protein>
    <recommendedName>
        <fullName evidence="1">Der GTPase-activating protein YihI</fullName>
    </recommendedName>
</protein>
<accession>Q8E8D7</accession>
<gene>
    <name evidence="1" type="primary">yihI</name>
    <name type="ordered locus">SO_4728</name>
</gene>
<evidence type="ECO:0000255" key="1">
    <source>
        <dbReference type="HAMAP-Rule" id="MF_01058"/>
    </source>
</evidence>
<evidence type="ECO:0000256" key="2">
    <source>
        <dbReference type="SAM" id="MobiDB-lite"/>
    </source>
</evidence>
<sequence>MSRSKKTRKGGENSPKQQPRVKKQDRAEVTGKRAEKGNKSGSRHNEALIQAQAPQKKAAQKKDPRHGSKKPVALALPTTTEKSATPKVKQPKLTDEQKLLKLEEDPRLNQLLDMLEEGRNLSDADQKWLDQQLNKIEALMIKLGISDELEDEAPAKSKADSDDDLFDRFESGAELLKDYQDKF</sequence>
<keyword id="KW-0343">GTPase activation</keyword>
<keyword id="KW-1185">Reference proteome</keyword>
<keyword id="KW-0690">Ribosome biogenesis</keyword>
<comment type="function">
    <text evidence="1">A GTPase-activating protein (GAP) that modifies Der/EngA GTPase function. May play a role in ribosome biogenesis.</text>
</comment>
<comment type="subunit">
    <text evidence="1">Interacts with Der.</text>
</comment>
<comment type="similarity">
    <text evidence="1">Belongs to the YihI family.</text>
</comment>
<reference key="1">
    <citation type="journal article" date="2002" name="Nat. Biotechnol.">
        <title>Genome sequence of the dissimilatory metal ion-reducing bacterium Shewanella oneidensis.</title>
        <authorList>
            <person name="Heidelberg J.F."/>
            <person name="Paulsen I.T."/>
            <person name="Nelson K.E."/>
            <person name="Gaidos E.J."/>
            <person name="Nelson W.C."/>
            <person name="Read T.D."/>
            <person name="Eisen J.A."/>
            <person name="Seshadri R."/>
            <person name="Ward N.L."/>
            <person name="Methe B.A."/>
            <person name="Clayton R.A."/>
            <person name="Meyer T."/>
            <person name="Tsapin A."/>
            <person name="Scott J."/>
            <person name="Beanan M.J."/>
            <person name="Brinkac L.M."/>
            <person name="Daugherty S.C."/>
            <person name="DeBoy R.T."/>
            <person name="Dodson R.J."/>
            <person name="Durkin A.S."/>
            <person name="Haft D.H."/>
            <person name="Kolonay J.F."/>
            <person name="Madupu R."/>
            <person name="Peterson J.D."/>
            <person name="Umayam L.A."/>
            <person name="White O."/>
            <person name="Wolf A.M."/>
            <person name="Vamathevan J.J."/>
            <person name="Weidman J.F."/>
            <person name="Impraim M."/>
            <person name="Lee K."/>
            <person name="Berry K.J."/>
            <person name="Lee C."/>
            <person name="Mueller J."/>
            <person name="Khouri H.M."/>
            <person name="Gill J."/>
            <person name="Utterback T.R."/>
            <person name="McDonald L.A."/>
            <person name="Feldblyum T.V."/>
            <person name="Smith H.O."/>
            <person name="Venter J.C."/>
            <person name="Nealson K.H."/>
            <person name="Fraser C.M."/>
        </authorList>
    </citation>
    <scope>NUCLEOTIDE SEQUENCE [LARGE SCALE GENOMIC DNA]</scope>
    <source>
        <strain>ATCC 700550 / JCM 31522 / CIP 106686 / LMG 19005 / NCIMB 14063 / MR-1</strain>
    </source>
</reference>
<organism>
    <name type="scientific">Shewanella oneidensis (strain ATCC 700550 / JCM 31522 / CIP 106686 / LMG 19005 / NCIMB 14063 / MR-1)</name>
    <dbReference type="NCBI Taxonomy" id="211586"/>
    <lineage>
        <taxon>Bacteria</taxon>
        <taxon>Pseudomonadati</taxon>
        <taxon>Pseudomonadota</taxon>
        <taxon>Gammaproteobacteria</taxon>
        <taxon>Alteromonadales</taxon>
        <taxon>Shewanellaceae</taxon>
        <taxon>Shewanella</taxon>
    </lineage>
</organism>